<dbReference type="EMBL" id="CP001601">
    <property type="protein sequence ID" value="ACP31993.1"/>
    <property type="molecule type" value="Genomic_DNA"/>
</dbReference>
<dbReference type="RefSeq" id="WP_010189645.1">
    <property type="nucleotide sequence ID" value="NZ_ACLH01000066.1"/>
</dbReference>
<dbReference type="SMR" id="C3PKQ7"/>
<dbReference type="STRING" id="548476.cauri_0394"/>
<dbReference type="GeneID" id="31923013"/>
<dbReference type="KEGG" id="car:cauri_0394"/>
<dbReference type="eggNOG" id="COG0091">
    <property type="taxonomic scope" value="Bacteria"/>
</dbReference>
<dbReference type="HOGENOM" id="CLU_083987_3_2_11"/>
<dbReference type="OrthoDB" id="9805969at2"/>
<dbReference type="Proteomes" id="UP000002077">
    <property type="component" value="Chromosome"/>
</dbReference>
<dbReference type="GO" id="GO:0022625">
    <property type="term" value="C:cytosolic large ribosomal subunit"/>
    <property type="evidence" value="ECO:0007669"/>
    <property type="project" value="TreeGrafter"/>
</dbReference>
<dbReference type="GO" id="GO:0019843">
    <property type="term" value="F:rRNA binding"/>
    <property type="evidence" value="ECO:0007669"/>
    <property type="project" value="UniProtKB-UniRule"/>
</dbReference>
<dbReference type="GO" id="GO:0003735">
    <property type="term" value="F:structural constituent of ribosome"/>
    <property type="evidence" value="ECO:0007669"/>
    <property type="project" value="InterPro"/>
</dbReference>
<dbReference type="GO" id="GO:0006412">
    <property type="term" value="P:translation"/>
    <property type="evidence" value="ECO:0007669"/>
    <property type="project" value="UniProtKB-UniRule"/>
</dbReference>
<dbReference type="CDD" id="cd00336">
    <property type="entry name" value="Ribosomal_L22"/>
    <property type="match status" value="1"/>
</dbReference>
<dbReference type="FunFam" id="3.90.470.10:FF:000002">
    <property type="entry name" value="50S ribosomal protein L22"/>
    <property type="match status" value="1"/>
</dbReference>
<dbReference type="Gene3D" id="3.90.470.10">
    <property type="entry name" value="Ribosomal protein L22/L17"/>
    <property type="match status" value="1"/>
</dbReference>
<dbReference type="HAMAP" id="MF_01331_B">
    <property type="entry name" value="Ribosomal_uL22_B"/>
    <property type="match status" value="1"/>
</dbReference>
<dbReference type="InterPro" id="IPR001063">
    <property type="entry name" value="Ribosomal_uL22"/>
</dbReference>
<dbReference type="InterPro" id="IPR005727">
    <property type="entry name" value="Ribosomal_uL22_bac/chlpt-type"/>
</dbReference>
<dbReference type="InterPro" id="IPR047867">
    <property type="entry name" value="Ribosomal_uL22_bac/org-type"/>
</dbReference>
<dbReference type="InterPro" id="IPR018260">
    <property type="entry name" value="Ribosomal_uL22_CS"/>
</dbReference>
<dbReference type="InterPro" id="IPR036394">
    <property type="entry name" value="Ribosomal_uL22_sf"/>
</dbReference>
<dbReference type="NCBIfam" id="TIGR01044">
    <property type="entry name" value="rplV_bact"/>
    <property type="match status" value="1"/>
</dbReference>
<dbReference type="PANTHER" id="PTHR13501">
    <property type="entry name" value="CHLOROPLAST 50S RIBOSOMAL PROTEIN L22-RELATED"/>
    <property type="match status" value="1"/>
</dbReference>
<dbReference type="PANTHER" id="PTHR13501:SF8">
    <property type="entry name" value="LARGE RIBOSOMAL SUBUNIT PROTEIN UL22M"/>
    <property type="match status" value="1"/>
</dbReference>
<dbReference type="Pfam" id="PF00237">
    <property type="entry name" value="Ribosomal_L22"/>
    <property type="match status" value="1"/>
</dbReference>
<dbReference type="SUPFAM" id="SSF54843">
    <property type="entry name" value="Ribosomal protein L22"/>
    <property type="match status" value="1"/>
</dbReference>
<dbReference type="PROSITE" id="PS00464">
    <property type="entry name" value="RIBOSOMAL_L22"/>
    <property type="match status" value="1"/>
</dbReference>
<reference key="1">
    <citation type="journal article" date="2010" name="BMC Genomics">
        <title>Complete genome sequence and lifestyle of black-pigmented Corynebacterium aurimucosum ATCC 700975 (formerly C. nigricans CN-1) isolated from a vaginal swab of a woman with spontaneous abortion.</title>
        <authorList>
            <person name="Trost E."/>
            <person name="Gotker S."/>
            <person name="Schneider J."/>
            <person name="Schneiker-Bekel S."/>
            <person name="Szczepanowski R."/>
            <person name="Tilker A."/>
            <person name="Viehoever P."/>
            <person name="Arnold W."/>
            <person name="Bekel T."/>
            <person name="Blom J."/>
            <person name="Gartemann K.H."/>
            <person name="Linke B."/>
            <person name="Goesmann A."/>
            <person name="Puhler A."/>
            <person name="Shukla S.K."/>
            <person name="Tauch A."/>
        </authorList>
    </citation>
    <scope>NUCLEOTIDE SEQUENCE [LARGE SCALE GENOMIC DNA]</scope>
    <source>
        <strain>ATCC 700975 / DSM 44827 / CIP 107346 / CN-1</strain>
    </source>
</reference>
<feature type="chain" id="PRO_1000166055" description="Large ribosomal subunit protein uL22">
    <location>
        <begin position="1"/>
        <end position="120"/>
    </location>
</feature>
<name>RL22_CORA7</name>
<proteinExistence type="inferred from homology"/>
<accession>C3PKQ7</accession>
<sequence>MSDTITSASATARYVRVTPMKARRVIDLVRGKSVAEALAILKYAPQGAAEPVAKVVASAAANAENNFGLDPRTLVISEAYANEGPTMRRFQPRAQGRAFMIRKRTSHITVVVESQKEGAK</sequence>
<comment type="function">
    <text evidence="1">This protein binds specifically to 23S rRNA; its binding is stimulated by other ribosomal proteins, e.g. L4, L17, and L20. It is important during the early stages of 50S assembly. It makes multiple contacts with different domains of the 23S rRNA in the assembled 50S subunit and ribosome (By similarity).</text>
</comment>
<comment type="function">
    <text evidence="1">The globular domain of the protein is located near the polypeptide exit tunnel on the outside of the subunit, while an extended beta-hairpin is found that lines the wall of the exit tunnel in the center of the 70S ribosome.</text>
</comment>
<comment type="subunit">
    <text evidence="1">Part of the 50S ribosomal subunit.</text>
</comment>
<comment type="similarity">
    <text evidence="1">Belongs to the universal ribosomal protein uL22 family.</text>
</comment>
<keyword id="KW-1185">Reference proteome</keyword>
<keyword id="KW-0687">Ribonucleoprotein</keyword>
<keyword id="KW-0689">Ribosomal protein</keyword>
<keyword id="KW-0694">RNA-binding</keyword>
<keyword id="KW-0699">rRNA-binding</keyword>
<organism>
    <name type="scientific">Corynebacterium aurimucosum (strain ATCC 700975 / DSM 44827 / CIP 107346 / CN-1)</name>
    <name type="common">Corynebacterium nigricans</name>
    <dbReference type="NCBI Taxonomy" id="548476"/>
    <lineage>
        <taxon>Bacteria</taxon>
        <taxon>Bacillati</taxon>
        <taxon>Actinomycetota</taxon>
        <taxon>Actinomycetes</taxon>
        <taxon>Mycobacteriales</taxon>
        <taxon>Corynebacteriaceae</taxon>
        <taxon>Corynebacterium</taxon>
    </lineage>
</organism>
<gene>
    <name evidence="1" type="primary">rplV</name>
    <name type="ordered locus">cauri_0394</name>
</gene>
<protein>
    <recommendedName>
        <fullName evidence="1">Large ribosomal subunit protein uL22</fullName>
    </recommendedName>
    <alternativeName>
        <fullName evidence="2">50S ribosomal protein L22</fullName>
    </alternativeName>
</protein>
<evidence type="ECO:0000255" key="1">
    <source>
        <dbReference type="HAMAP-Rule" id="MF_01331"/>
    </source>
</evidence>
<evidence type="ECO:0000305" key="2"/>